<reference key="1">
    <citation type="submission" date="2006-08" db="EMBL/GenBank/DDBJ databases">
        <title>Complete sequence of chromosome 1 of Shewanella sp. MR-7.</title>
        <authorList>
            <person name="Copeland A."/>
            <person name="Lucas S."/>
            <person name="Lapidus A."/>
            <person name="Barry K."/>
            <person name="Detter J.C."/>
            <person name="Glavina del Rio T."/>
            <person name="Hammon N."/>
            <person name="Israni S."/>
            <person name="Dalin E."/>
            <person name="Tice H."/>
            <person name="Pitluck S."/>
            <person name="Kiss H."/>
            <person name="Brettin T."/>
            <person name="Bruce D."/>
            <person name="Han C."/>
            <person name="Tapia R."/>
            <person name="Gilna P."/>
            <person name="Schmutz J."/>
            <person name="Larimer F."/>
            <person name="Land M."/>
            <person name="Hauser L."/>
            <person name="Kyrpides N."/>
            <person name="Mikhailova N."/>
            <person name="Nealson K."/>
            <person name="Konstantinidis K."/>
            <person name="Klappenbach J."/>
            <person name="Tiedje J."/>
            <person name="Richardson P."/>
        </authorList>
    </citation>
    <scope>NUCLEOTIDE SEQUENCE [LARGE SCALE GENOMIC DNA]</scope>
    <source>
        <strain>MR-7</strain>
    </source>
</reference>
<keyword id="KW-0997">Cell inner membrane</keyword>
<keyword id="KW-1003">Cell membrane</keyword>
<keyword id="KW-0472">Membrane</keyword>
<keyword id="KW-0812">Transmembrane</keyword>
<keyword id="KW-1133">Transmembrane helix</keyword>
<accession>Q0HQB7</accession>
<proteinExistence type="inferred from homology"/>
<name>Y3708_SHESR</name>
<evidence type="ECO:0000255" key="1">
    <source>
        <dbReference type="HAMAP-Rule" id="MF_00672"/>
    </source>
</evidence>
<evidence type="ECO:0000256" key="2">
    <source>
        <dbReference type="SAM" id="MobiDB-lite"/>
    </source>
</evidence>
<feature type="chain" id="PRO_1000044730" description="UPF0761 membrane protein Shewmr7_3708">
    <location>
        <begin position="1"/>
        <end position="337"/>
    </location>
</feature>
<feature type="transmembrane region" description="Helical" evidence="1">
    <location>
        <begin position="4"/>
        <end position="24"/>
    </location>
</feature>
<feature type="transmembrane region" description="Helical" evidence="1">
    <location>
        <begin position="45"/>
        <end position="65"/>
    </location>
</feature>
<feature type="transmembrane region" description="Helical" evidence="1">
    <location>
        <begin position="102"/>
        <end position="122"/>
    </location>
</feature>
<feature type="transmembrane region" description="Helical" evidence="1">
    <location>
        <begin position="137"/>
        <end position="157"/>
    </location>
</feature>
<feature type="transmembrane region" description="Helical" evidence="1">
    <location>
        <begin position="183"/>
        <end position="203"/>
    </location>
</feature>
<feature type="transmembrane region" description="Helical" evidence="1">
    <location>
        <begin position="213"/>
        <end position="233"/>
    </location>
</feature>
<feature type="transmembrane region" description="Helical" evidence="1">
    <location>
        <begin position="247"/>
        <end position="267"/>
    </location>
</feature>
<feature type="region of interest" description="Disordered" evidence="2">
    <location>
        <begin position="291"/>
        <end position="337"/>
    </location>
</feature>
<feature type="compositionally biased region" description="Polar residues" evidence="2">
    <location>
        <begin position="307"/>
        <end position="319"/>
    </location>
</feature>
<feature type="compositionally biased region" description="Polar residues" evidence="2">
    <location>
        <begin position="328"/>
        <end position="337"/>
    </location>
</feature>
<dbReference type="EMBL" id="CP000444">
    <property type="protein sequence ID" value="ABI44688.1"/>
    <property type="molecule type" value="Genomic_DNA"/>
</dbReference>
<dbReference type="KEGG" id="shm:Shewmr7_3708"/>
<dbReference type="HOGENOM" id="CLU_032288_0_0_6"/>
<dbReference type="GO" id="GO:0005886">
    <property type="term" value="C:plasma membrane"/>
    <property type="evidence" value="ECO:0007669"/>
    <property type="project" value="UniProtKB-SubCell"/>
</dbReference>
<dbReference type="HAMAP" id="MF_00672">
    <property type="entry name" value="UPF0761"/>
    <property type="match status" value="1"/>
</dbReference>
<dbReference type="InterPro" id="IPR023679">
    <property type="entry name" value="UPF0761_bac"/>
</dbReference>
<dbReference type="InterPro" id="IPR017039">
    <property type="entry name" value="Virul_fac_BrkB"/>
</dbReference>
<dbReference type="NCBIfam" id="NF002457">
    <property type="entry name" value="PRK01637.1"/>
    <property type="match status" value="1"/>
</dbReference>
<dbReference type="NCBIfam" id="TIGR00765">
    <property type="entry name" value="yihY_not_rbn"/>
    <property type="match status" value="1"/>
</dbReference>
<dbReference type="PANTHER" id="PTHR30213">
    <property type="entry name" value="INNER MEMBRANE PROTEIN YHJD"/>
    <property type="match status" value="1"/>
</dbReference>
<dbReference type="PANTHER" id="PTHR30213:SF0">
    <property type="entry name" value="UPF0761 MEMBRANE PROTEIN YIHY"/>
    <property type="match status" value="1"/>
</dbReference>
<dbReference type="Pfam" id="PF03631">
    <property type="entry name" value="Virul_fac_BrkB"/>
    <property type="match status" value="1"/>
</dbReference>
<organism>
    <name type="scientific">Shewanella sp. (strain MR-7)</name>
    <dbReference type="NCBI Taxonomy" id="60481"/>
    <lineage>
        <taxon>Bacteria</taxon>
        <taxon>Pseudomonadati</taxon>
        <taxon>Pseudomonadota</taxon>
        <taxon>Gammaproteobacteria</taxon>
        <taxon>Alteromonadales</taxon>
        <taxon>Shewanellaceae</taxon>
        <taxon>Shewanella</taxon>
    </lineage>
</organism>
<comment type="subcellular location">
    <subcellularLocation>
        <location evidence="1">Cell inner membrane</location>
        <topology evidence="1">Multi-pass membrane protein</topology>
    </subcellularLocation>
</comment>
<comment type="similarity">
    <text evidence="1">Belongs to the UPF0761 family.</text>
</comment>
<sequence length="337" mass="36880">MTKKIELAQIQVLFLGIWRFLLHLRQRLVEDQINIRAGHLAYVTLLSLVPMVAVTMSMLSAFPVFKGIRGQIEAFVYENFLPAAGDTVQVYINEFVGNASKGTAVGIAALVVVAIMLISAIDKSLNNIWRTKEKRSVVVAFSMYWMVITLGPVLVGASLVATSYVVSLKLFEGDALSGVMPLFIERLPMLFSVAAFLLLYMVVPNQKVKFWHALLGAVVAALLFELGKKGFALYVTKFPSYEAIYGALATIPILFVWVYLSWMIVLLGAEITAAMPEYLDYESSSDINETNLDGQPLAAQDTPAAQPETTSAQSSQVLETTDELAATAPQSSTLDKP</sequence>
<gene>
    <name type="ordered locus">Shewmr7_3708</name>
</gene>
<protein>
    <recommendedName>
        <fullName evidence="1">UPF0761 membrane protein Shewmr7_3708</fullName>
    </recommendedName>
</protein>